<proteinExistence type="inferred from homology"/>
<organism>
    <name type="scientific">Burkholderia mallei (strain NCTC 10229)</name>
    <dbReference type="NCBI Taxonomy" id="412022"/>
    <lineage>
        <taxon>Bacteria</taxon>
        <taxon>Pseudomonadati</taxon>
        <taxon>Pseudomonadota</taxon>
        <taxon>Betaproteobacteria</taxon>
        <taxon>Burkholderiales</taxon>
        <taxon>Burkholderiaceae</taxon>
        <taxon>Burkholderia</taxon>
        <taxon>pseudomallei group</taxon>
    </lineage>
</organism>
<comment type="function">
    <text evidence="1">Condensation of UDP-2,3-diacylglucosamine and 2,3-diacylglucosamine-1-phosphate to form lipid A disaccharide, a precursor of lipid A, a phosphorylated glycolipid that anchors the lipopolysaccharide to the outer membrane of the cell.</text>
</comment>
<comment type="catalytic activity">
    <reaction evidence="1">
        <text>a lipid X + a UDP-2-N,3-O-bis[(3R)-3-hydroxyacyl]-alpha-D-glucosamine = a lipid A disaccharide + UDP + H(+)</text>
        <dbReference type="Rhea" id="RHEA:67828"/>
        <dbReference type="ChEBI" id="CHEBI:15378"/>
        <dbReference type="ChEBI" id="CHEBI:58223"/>
        <dbReference type="ChEBI" id="CHEBI:137748"/>
        <dbReference type="ChEBI" id="CHEBI:176338"/>
        <dbReference type="ChEBI" id="CHEBI:176343"/>
        <dbReference type="EC" id="2.4.1.182"/>
    </reaction>
</comment>
<comment type="pathway">
    <text evidence="1">Bacterial outer membrane biogenesis; LPS lipid A biosynthesis.</text>
</comment>
<comment type="similarity">
    <text evidence="1">Belongs to the LpxB family.</text>
</comment>
<gene>
    <name evidence="1" type="primary">lpxB</name>
    <name type="ordered locus">BMA10229_A3269</name>
</gene>
<sequence length="388" mass="42046">MAFQLTPLRVALVAGEPSGDLLGASLLGGLHARLPASSRYYGIGGPRMSAVEFDAHWPMEKLAVRGYVEALKHIPEILRIRGELKRQLFAEPPDAFVGIDAPDFNFGLEQALRGAGIPTIHFVCPSIWAWRGGRIKKIVKAVDHMLCLFPFEPELLEKAGVAATFVGHPLADEIPLEPDTHGARIALGLPGGGPVIAVLPGSRRSEIELIGPTFFDAMELMQQREPGVRFVVPAATPALRALLQPLVDAHPSLSVTLTEGRAQVAMTAADAILVKSGTVTLEAALLKKPMVISYKVPWLTGQIMRRQGYLPYVGLPNILAGRFVVPELLQHFATPDALADATLTQLRDDANRRALADIFTDMHLALRQNTAQRAAEAVAHVIDSRKPR</sequence>
<dbReference type="EC" id="2.4.1.182" evidence="1"/>
<dbReference type="EMBL" id="CP000546">
    <property type="protein sequence ID" value="ABN02969.1"/>
    <property type="molecule type" value="Genomic_DNA"/>
</dbReference>
<dbReference type="RefSeq" id="WP_004266728.1">
    <property type="nucleotide sequence ID" value="NC_008836.1"/>
</dbReference>
<dbReference type="SMR" id="A2SB86"/>
<dbReference type="CAZy" id="GT19">
    <property type="family name" value="Glycosyltransferase Family 19"/>
</dbReference>
<dbReference type="KEGG" id="bml:BMA10229_A3269"/>
<dbReference type="HOGENOM" id="CLU_036577_3_0_4"/>
<dbReference type="UniPathway" id="UPA00973"/>
<dbReference type="Proteomes" id="UP000002283">
    <property type="component" value="Chromosome I"/>
</dbReference>
<dbReference type="GO" id="GO:0016020">
    <property type="term" value="C:membrane"/>
    <property type="evidence" value="ECO:0007669"/>
    <property type="project" value="GOC"/>
</dbReference>
<dbReference type="GO" id="GO:0008915">
    <property type="term" value="F:lipid-A-disaccharide synthase activity"/>
    <property type="evidence" value="ECO:0007669"/>
    <property type="project" value="UniProtKB-UniRule"/>
</dbReference>
<dbReference type="GO" id="GO:0005543">
    <property type="term" value="F:phospholipid binding"/>
    <property type="evidence" value="ECO:0007669"/>
    <property type="project" value="TreeGrafter"/>
</dbReference>
<dbReference type="GO" id="GO:0009245">
    <property type="term" value="P:lipid A biosynthetic process"/>
    <property type="evidence" value="ECO:0007669"/>
    <property type="project" value="UniProtKB-UniRule"/>
</dbReference>
<dbReference type="HAMAP" id="MF_00392">
    <property type="entry name" value="LpxB"/>
    <property type="match status" value="1"/>
</dbReference>
<dbReference type="InterPro" id="IPR003835">
    <property type="entry name" value="Glyco_trans_19"/>
</dbReference>
<dbReference type="NCBIfam" id="TIGR00215">
    <property type="entry name" value="lpxB"/>
    <property type="match status" value="1"/>
</dbReference>
<dbReference type="PANTHER" id="PTHR30372">
    <property type="entry name" value="LIPID-A-DISACCHARIDE SYNTHASE"/>
    <property type="match status" value="1"/>
</dbReference>
<dbReference type="PANTHER" id="PTHR30372:SF4">
    <property type="entry name" value="LIPID-A-DISACCHARIDE SYNTHASE, MITOCHONDRIAL-RELATED"/>
    <property type="match status" value="1"/>
</dbReference>
<dbReference type="Pfam" id="PF02684">
    <property type="entry name" value="LpxB"/>
    <property type="match status" value="1"/>
</dbReference>
<dbReference type="SUPFAM" id="SSF53756">
    <property type="entry name" value="UDP-Glycosyltransferase/glycogen phosphorylase"/>
    <property type="match status" value="1"/>
</dbReference>
<evidence type="ECO:0000255" key="1">
    <source>
        <dbReference type="HAMAP-Rule" id="MF_00392"/>
    </source>
</evidence>
<name>LPXB_BURM9</name>
<feature type="chain" id="PRO_1000049388" description="Lipid-A-disaccharide synthase">
    <location>
        <begin position="1"/>
        <end position="388"/>
    </location>
</feature>
<accession>A2SB86</accession>
<protein>
    <recommendedName>
        <fullName evidence="1">Lipid-A-disaccharide synthase</fullName>
        <ecNumber evidence="1">2.4.1.182</ecNumber>
    </recommendedName>
</protein>
<reference key="1">
    <citation type="journal article" date="2010" name="Genome Biol. Evol.">
        <title>Continuing evolution of Burkholderia mallei through genome reduction and large-scale rearrangements.</title>
        <authorList>
            <person name="Losada L."/>
            <person name="Ronning C.M."/>
            <person name="DeShazer D."/>
            <person name="Woods D."/>
            <person name="Fedorova N."/>
            <person name="Kim H.S."/>
            <person name="Shabalina S.A."/>
            <person name="Pearson T.R."/>
            <person name="Brinkac L."/>
            <person name="Tan P."/>
            <person name="Nandi T."/>
            <person name="Crabtree J."/>
            <person name="Badger J."/>
            <person name="Beckstrom-Sternberg S."/>
            <person name="Saqib M."/>
            <person name="Schutzer S.E."/>
            <person name="Keim P."/>
            <person name="Nierman W.C."/>
        </authorList>
    </citation>
    <scope>NUCLEOTIDE SEQUENCE [LARGE SCALE GENOMIC DNA]</scope>
    <source>
        <strain>NCTC 10229</strain>
    </source>
</reference>
<keyword id="KW-0328">Glycosyltransferase</keyword>
<keyword id="KW-0441">Lipid A biosynthesis</keyword>
<keyword id="KW-0444">Lipid biosynthesis</keyword>
<keyword id="KW-0443">Lipid metabolism</keyword>
<keyword id="KW-0808">Transferase</keyword>